<protein>
    <recommendedName>
        <fullName evidence="1">UPF0434 protein Shewmr4_2420</fullName>
    </recommendedName>
</protein>
<organism>
    <name type="scientific">Shewanella sp. (strain MR-4)</name>
    <dbReference type="NCBI Taxonomy" id="60480"/>
    <lineage>
        <taxon>Bacteria</taxon>
        <taxon>Pseudomonadati</taxon>
        <taxon>Pseudomonadota</taxon>
        <taxon>Gammaproteobacteria</taxon>
        <taxon>Alteromonadales</taxon>
        <taxon>Shewanellaceae</taxon>
        <taxon>Shewanella</taxon>
    </lineage>
</organism>
<sequence>MAFDKKLLDIVACPVCKGKLEYDKTTQQLICKADKLAYPITDGIPVLLENRAVPLNEAV</sequence>
<accession>Q0HHH6</accession>
<name>Y2420_SHESM</name>
<evidence type="ECO:0000255" key="1">
    <source>
        <dbReference type="HAMAP-Rule" id="MF_01187"/>
    </source>
</evidence>
<proteinExistence type="inferred from homology"/>
<reference key="1">
    <citation type="submission" date="2006-08" db="EMBL/GenBank/DDBJ databases">
        <title>Complete sequence of Shewanella sp. MR-4.</title>
        <authorList>
            <consortium name="US DOE Joint Genome Institute"/>
            <person name="Copeland A."/>
            <person name="Lucas S."/>
            <person name="Lapidus A."/>
            <person name="Barry K."/>
            <person name="Detter J.C."/>
            <person name="Glavina del Rio T."/>
            <person name="Hammon N."/>
            <person name="Israni S."/>
            <person name="Dalin E."/>
            <person name="Tice H."/>
            <person name="Pitluck S."/>
            <person name="Kiss H."/>
            <person name="Brettin T."/>
            <person name="Bruce D."/>
            <person name="Han C."/>
            <person name="Tapia R."/>
            <person name="Gilna P."/>
            <person name="Schmutz J."/>
            <person name="Larimer F."/>
            <person name="Land M."/>
            <person name="Hauser L."/>
            <person name="Kyrpides N."/>
            <person name="Mikhailova N."/>
            <person name="Nealson K."/>
            <person name="Konstantinidis K."/>
            <person name="Klappenbach J."/>
            <person name="Tiedje J."/>
            <person name="Richardson P."/>
        </authorList>
    </citation>
    <scope>NUCLEOTIDE SEQUENCE [LARGE SCALE GENOMIC DNA]</scope>
    <source>
        <strain>MR-4</strain>
    </source>
</reference>
<feature type="chain" id="PRO_0000291168" description="UPF0434 protein Shewmr4_2420">
    <location>
        <begin position="1"/>
        <end position="59"/>
    </location>
</feature>
<dbReference type="EMBL" id="CP000446">
    <property type="protein sequence ID" value="ABI39491.1"/>
    <property type="molecule type" value="Genomic_DNA"/>
</dbReference>
<dbReference type="RefSeq" id="WP_011623174.1">
    <property type="nucleotide sequence ID" value="NC_008321.1"/>
</dbReference>
<dbReference type="SMR" id="Q0HHH6"/>
<dbReference type="KEGG" id="she:Shewmr4_2420"/>
<dbReference type="HOGENOM" id="CLU_155659_3_1_6"/>
<dbReference type="GO" id="GO:0005829">
    <property type="term" value="C:cytosol"/>
    <property type="evidence" value="ECO:0007669"/>
    <property type="project" value="TreeGrafter"/>
</dbReference>
<dbReference type="FunFam" id="2.20.25.10:FF:000002">
    <property type="entry name" value="UPF0434 protein YcaR"/>
    <property type="match status" value="1"/>
</dbReference>
<dbReference type="Gene3D" id="2.20.25.10">
    <property type="match status" value="1"/>
</dbReference>
<dbReference type="HAMAP" id="MF_01187">
    <property type="entry name" value="UPF0434"/>
    <property type="match status" value="1"/>
</dbReference>
<dbReference type="InterPro" id="IPR005651">
    <property type="entry name" value="Trm112-like"/>
</dbReference>
<dbReference type="PANTHER" id="PTHR33505:SF4">
    <property type="entry name" value="PROTEIN PREY, MITOCHONDRIAL"/>
    <property type="match status" value="1"/>
</dbReference>
<dbReference type="PANTHER" id="PTHR33505">
    <property type="entry name" value="ZGC:162634"/>
    <property type="match status" value="1"/>
</dbReference>
<dbReference type="Pfam" id="PF03966">
    <property type="entry name" value="Trm112p"/>
    <property type="match status" value="1"/>
</dbReference>
<dbReference type="SUPFAM" id="SSF158997">
    <property type="entry name" value="Trm112p-like"/>
    <property type="match status" value="1"/>
</dbReference>
<comment type="similarity">
    <text evidence="1">Belongs to the UPF0434 family.</text>
</comment>
<gene>
    <name type="ordered locus">Shewmr4_2420</name>
</gene>